<gene>
    <name evidence="1" type="primary">ruvA</name>
    <name type="ordered locus">MUL_1715</name>
</gene>
<dbReference type="EMBL" id="CP000325">
    <property type="protein sequence ID" value="ABL04201.1"/>
    <property type="molecule type" value="Genomic_DNA"/>
</dbReference>
<dbReference type="RefSeq" id="WP_011739821.1">
    <property type="nucleotide sequence ID" value="NC_008611.1"/>
</dbReference>
<dbReference type="SMR" id="A0PPD2"/>
<dbReference type="GeneID" id="93437646"/>
<dbReference type="KEGG" id="mul:MUL_1715"/>
<dbReference type="eggNOG" id="COG0632">
    <property type="taxonomic scope" value="Bacteria"/>
</dbReference>
<dbReference type="HOGENOM" id="CLU_087936_2_1_11"/>
<dbReference type="Proteomes" id="UP000000765">
    <property type="component" value="Chromosome"/>
</dbReference>
<dbReference type="GO" id="GO:0005737">
    <property type="term" value="C:cytoplasm"/>
    <property type="evidence" value="ECO:0007669"/>
    <property type="project" value="UniProtKB-SubCell"/>
</dbReference>
<dbReference type="GO" id="GO:0009379">
    <property type="term" value="C:Holliday junction helicase complex"/>
    <property type="evidence" value="ECO:0007669"/>
    <property type="project" value="InterPro"/>
</dbReference>
<dbReference type="GO" id="GO:0048476">
    <property type="term" value="C:Holliday junction resolvase complex"/>
    <property type="evidence" value="ECO:0007669"/>
    <property type="project" value="UniProtKB-UniRule"/>
</dbReference>
<dbReference type="GO" id="GO:0005524">
    <property type="term" value="F:ATP binding"/>
    <property type="evidence" value="ECO:0007669"/>
    <property type="project" value="InterPro"/>
</dbReference>
<dbReference type="GO" id="GO:0000400">
    <property type="term" value="F:four-way junction DNA binding"/>
    <property type="evidence" value="ECO:0007669"/>
    <property type="project" value="UniProtKB-UniRule"/>
</dbReference>
<dbReference type="GO" id="GO:0009378">
    <property type="term" value="F:four-way junction helicase activity"/>
    <property type="evidence" value="ECO:0007669"/>
    <property type="project" value="InterPro"/>
</dbReference>
<dbReference type="GO" id="GO:0006310">
    <property type="term" value="P:DNA recombination"/>
    <property type="evidence" value="ECO:0007669"/>
    <property type="project" value="UniProtKB-UniRule"/>
</dbReference>
<dbReference type="GO" id="GO:0006281">
    <property type="term" value="P:DNA repair"/>
    <property type="evidence" value="ECO:0007669"/>
    <property type="project" value="UniProtKB-UniRule"/>
</dbReference>
<dbReference type="CDD" id="cd14332">
    <property type="entry name" value="UBA_RuvA_C"/>
    <property type="match status" value="1"/>
</dbReference>
<dbReference type="FunFam" id="2.40.50.140:FF:000083">
    <property type="entry name" value="Holliday junction ATP-dependent DNA helicase RuvA"/>
    <property type="match status" value="1"/>
</dbReference>
<dbReference type="Gene3D" id="1.10.150.20">
    <property type="entry name" value="5' to 3' exonuclease, C-terminal subdomain"/>
    <property type="match status" value="1"/>
</dbReference>
<dbReference type="Gene3D" id="1.10.8.10">
    <property type="entry name" value="DNA helicase RuvA subunit, C-terminal domain"/>
    <property type="match status" value="1"/>
</dbReference>
<dbReference type="Gene3D" id="2.40.50.140">
    <property type="entry name" value="Nucleic acid-binding proteins"/>
    <property type="match status" value="1"/>
</dbReference>
<dbReference type="HAMAP" id="MF_00031">
    <property type="entry name" value="DNA_HJ_migration_RuvA"/>
    <property type="match status" value="1"/>
</dbReference>
<dbReference type="InterPro" id="IPR013849">
    <property type="entry name" value="DNA_helicase_Holl-junc_RuvA_I"/>
</dbReference>
<dbReference type="InterPro" id="IPR012340">
    <property type="entry name" value="NA-bd_OB-fold"/>
</dbReference>
<dbReference type="InterPro" id="IPR000085">
    <property type="entry name" value="RuvA"/>
</dbReference>
<dbReference type="InterPro" id="IPR010994">
    <property type="entry name" value="RuvA_2-like"/>
</dbReference>
<dbReference type="InterPro" id="IPR011114">
    <property type="entry name" value="RuvA_C"/>
</dbReference>
<dbReference type="InterPro" id="IPR036267">
    <property type="entry name" value="RuvA_C_sf"/>
</dbReference>
<dbReference type="NCBIfam" id="TIGR00084">
    <property type="entry name" value="ruvA"/>
    <property type="match status" value="1"/>
</dbReference>
<dbReference type="Pfam" id="PF14520">
    <property type="entry name" value="HHH_5"/>
    <property type="match status" value="1"/>
</dbReference>
<dbReference type="Pfam" id="PF07499">
    <property type="entry name" value="RuvA_C"/>
    <property type="match status" value="1"/>
</dbReference>
<dbReference type="Pfam" id="PF01330">
    <property type="entry name" value="RuvA_N"/>
    <property type="match status" value="1"/>
</dbReference>
<dbReference type="SUPFAM" id="SSF46929">
    <property type="entry name" value="DNA helicase RuvA subunit, C-terminal domain"/>
    <property type="match status" value="1"/>
</dbReference>
<dbReference type="SUPFAM" id="SSF50249">
    <property type="entry name" value="Nucleic acid-binding proteins"/>
    <property type="match status" value="1"/>
</dbReference>
<dbReference type="SUPFAM" id="SSF47781">
    <property type="entry name" value="RuvA domain 2-like"/>
    <property type="match status" value="1"/>
</dbReference>
<feature type="chain" id="PRO_1000002494" description="Holliday junction branch migration complex subunit RuvA">
    <location>
        <begin position="1"/>
        <end position="197"/>
    </location>
</feature>
<feature type="region of interest" description="Domain I" evidence="1">
    <location>
        <begin position="1"/>
        <end position="63"/>
    </location>
</feature>
<feature type="region of interest" description="Domain II" evidence="1">
    <location>
        <begin position="64"/>
        <end position="139"/>
    </location>
</feature>
<feature type="region of interest" description="Flexible linker" evidence="1">
    <location>
        <begin position="139"/>
        <end position="143"/>
    </location>
</feature>
<feature type="region of interest" description="Domain III" evidence="1">
    <location>
        <begin position="144"/>
        <end position="197"/>
    </location>
</feature>
<accession>A0PPD2</accession>
<proteinExistence type="inferred from homology"/>
<evidence type="ECO:0000255" key="1">
    <source>
        <dbReference type="HAMAP-Rule" id="MF_00031"/>
    </source>
</evidence>
<reference key="1">
    <citation type="journal article" date="2007" name="Genome Res.">
        <title>Reductive evolution and niche adaptation inferred from the genome of Mycobacterium ulcerans, the causative agent of Buruli ulcer.</title>
        <authorList>
            <person name="Stinear T.P."/>
            <person name="Seemann T."/>
            <person name="Pidot S."/>
            <person name="Frigui W."/>
            <person name="Reysset G."/>
            <person name="Garnier T."/>
            <person name="Meurice G."/>
            <person name="Simon D."/>
            <person name="Bouchier C."/>
            <person name="Ma L."/>
            <person name="Tichit M."/>
            <person name="Porter J.L."/>
            <person name="Ryan J."/>
            <person name="Johnson P.D.R."/>
            <person name="Davies J.K."/>
            <person name="Jenkin G.A."/>
            <person name="Small P.L.C."/>
            <person name="Jones L.M."/>
            <person name="Tekaia F."/>
            <person name="Laval F."/>
            <person name="Daffe M."/>
            <person name="Parkhill J."/>
            <person name="Cole S.T."/>
        </authorList>
    </citation>
    <scope>NUCLEOTIDE SEQUENCE [LARGE SCALE GENOMIC DNA]</scope>
    <source>
        <strain>Agy99</strain>
    </source>
</reference>
<organism>
    <name type="scientific">Mycobacterium ulcerans (strain Agy99)</name>
    <dbReference type="NCBI Taxonomy" id="362242"/>
    <lineage>
        <taxon>Bacteria</taxon>
        <taxon>Bacillati</taxon>
        <taxon>Actinomycetota</taxon>
        <taxon>Actinomycetes</taxon>
        <taxon>Mycobacteriales</taxon>
        <taxon>Mycobacteriaceae</taxon>
        <taxon>Mycobacterium</taxon>
        <taxon>Mycobacterium ulcerans group</taxon>
    </lineage>
</organism>
<comment type="function">
    <text evidence="1">The RuvA-RuvB-RuvC complex processes Holliday junction (HJ) DNA during genetic recombination and DNA repair, while the RuvA-RuvB complex plays an important role in the rescue of blocked DNA replication forks via replication fork reversal (RFR). RuvA specifically binds to HJ cruciform DNA, conferring on it an open structure. The RuvB hexamer acts as an ATP-dependent pump, pulling dsDNA into and through the RuvAB complex. HJ branch migration allows RuvC to scan DNA until it finds its consensus sequence, where it cleaves and resolves the cruciform DNA.</text>
</comment>
<comment type="subunit">
    <text evidence="1">Homotetramer. Forms an RuvA(8)-RuvB(12)-Holliday junction (HJ) complex. HJ DNA is sandwiched between 2 RuvA tetramers; dsDNA enters through RuvA and exits via RuvB. An RuvB hexamer assembles on each DNA strand where it exits the tetramer. Each RuvB hexamer is contacted by two RuvA subunits (via domain III) on 2 adjacent RuvB subunits; this complex drives branch migration. In the full resolvosome a probable DNA-RuvA(4)-RuvB(12)-RuvC(2) complex forms which resolves the HJ.</text>
</comment>
<comment type="subcellular location">
    <subcellularLocation>
        <location evidence="1">Cytoplasm</location>
    </subcellularLocation>
</comment>
<comment type="domain">
    <text evidence="1">Has three domains with a flexible linker between the domains II and III and assumes an 'L' shape. Domain III is highly mobile and contacts RuvB.</text>
</comment>
<comment type="similarity">
    <text evidence="1">Belongs to the RuvA family.</text>
</comment>
<protein>
    <recommendedName>
        <fullName evidence="1">Holliday junction branch migration complex subunit RuvA</fullName>
    </recommendedName>
</protein>
<keyword id="KW-0963">Cytoplasm</keyword>
<keyword id="KW-0227">DNA damage</keyword>
<keyword id="KW-0233">DNA recombination</keyword>
<keyword id="KW-0234">DNA repair</keyword>
<keyword id="KW-0238">DNA-binding</keyword>
<sequence length="197" mass="20272">MISSLRGEVLEVALDHVVIEAAGVGYRVNATPSTLATLRQGTDARLITAMIVREDSMTLYGFVDGETRDLFLTLLSVSGVGPRLAMATLSVHDANGLRQALADGDVTALTRVPGIGKRGAERMVVELRDKVGPAGSAATAPAVNGHTVRAPVVEALVGLGFAAKQAEEATDKVLAGDGEATTSSALRAALSLLGKAR</sequence>
<name>RUVA_MYCUA</name>